<feature type="chain" id="PRO_0000300165" description="GTP cyclohydrolase MptA">
    <location>
        <begin position="1"/>
        <end position="311"/>
    </location>
</feature>
<feature type="site" description="May be catalytically important" evidence="1">
    <location>
        <position position="161"/>
    </location>
</feature>
<reference key="1">
    <citation type="journal article" date="2007" name="Proc. Natl. Acad. Sci. U.S.A.">
        <title>Genomic and metabolic adaptations of Methanobrevibacter smithii to the human gut.</title>
        <authorList>
            <person name="Samuel B.S."/>
            <person name="Hansen E.E."/>
            <person name="Manchester J.K."/>
            <person name="Coutinho P.M."/>
            <person name="Henrissat B."/>
            <person name="Fulton R."/>
            <person name="Latreille P."/>
            <person name="Kim K."/>
            <person name="Wilson R.K."/>
            <person name="Gordon J.I."/>
        </authorList>
    </citation>
    <scope>NUCLEOTIDE SEQUENCE [LARGE SCALE GENOMIC DNA]</scope>
    <source>
        <strain>ATCC 35061 / DSM 861 / OCM 144 / PS</strain>
    </source>
</reference>
<evidence type="ECO:0000255" key="1">
    <source>
        <dbReference type="HAMAP-Rule" id="MF_01527"/>
    </source>
</evidence>
<accession>A5UM10</accession>
<name>MPTA_METS3</name>
<gene>
    <name evidence="1" type="primary">mptA</name>
    <name type="ordered locus">Msm_1033</name>
</gene>
<keyword id="KW-0378">Hydrolase</keyword>
<keyword id="KW-0408">Iron</keyword>
<keyword id="KW-0479">Metal-binding</keyword>
<proteinExistence type="inferred from homology"/>
<organism>
    <name type="scientific">Methanobrevibacter smithii (strain ATCC 35061 / DSM 861 / OCM 144 / PS)</name>
    <dbReference type="NCBI Taxonomy" id="420247"/>
    <lineage>
        <taxon>Archaea</taxon>
        <taxon>Methanobacteriati</taxon>
        <taxon>Methanobacteriota</taxon>
        <taxon>Methanomada group</taxon>
        <taxon>Methanobacteria</taxon>
        <taxon>Methanobacteriales</taxon>
        <taxon>Methanobacteriaceae</taxon>
        <taxon>Methanobrevibacter</taxon>
    </lineage>
</organism>
<dbReference type="EC" id="3.5.4.39" evidence="1"/>
<dbReference type="EMBL" id="CP000678">
    <property type="protein sequence ID" value="ABQ87238.1"/>
    <property type="molecule type" value="Genomic_DNA"/>
</dbReference>
<dbReference type="RefSeq" id="WP_004035824.1">
    <property type="nucleotide sequence ID" value="NZ_CP117965.1"/>
</dbReference>
<dbReference type="SMR" id="A5UM10"/>
<dbReference type="STRING" id="420247.Msm_1033"/>
<dbReference type="EnsemblBacteria" id="ABQ87238">
    <property type="protein sequence ID" value="ABQ87238"/>
    <property type="gene ID" value="Msm_1033"/>
</dbReference>
<dbReference type="GeneID" id="78817673"/>
<dbReference type="KEGG" id="msi:Msm_1033"/>
<dbReference type="PATRIC" id="fig|420247.28.peg.1031"/>
<dbReference type="eggNOG" id="arCOG04301">
    <property type="taxonomic scope" value="Archaea"/>
</dbReference>
<dbReference type="HOGENOM" id="CLU_062816_1_0_2"/>
<dbReference type="UniPathway" id="UPA00065"/>
<dbReference type="Proteomes" id="UP000001992">
    <property type="component" value="Chromosome"/>
</dbReference>
<dbReference type="GO" id="GO:0003934">
    <property type="term" value="F:GTP cyclohydrolase I activity"/>
    <property type="evidence" value="ECO:0007669"/>
    <property type="project" value="InterPro"/>
</dbReference>
<dbReference type="GO" id="GO:0044682">
    <property type="term" value="F:GTP cyclohydrolase IV activity"/>
    <property type="evidence" value="ECO:0007669"/>
    <property type="project" value="UniProtKB-UniRule"/>
</dbReference>
<dbReference type="GO" id="GO:0005506">
    <property type="term" value="F:iron ion binding"/>
    <property type="evidence" value="ECO:0007669"/>
    <property type="project" value="UniProtKB-UniRule"/>
</dbReference>
<dbReference type="GO" id="GO:2001118">
    <property type="term" value="P:tetrahydromethanopterin biosynthetic process"/>
    <property type="evidence" value="ECO:0007669"/>
    <property type="project" value="UniProtKB-UniRule"/>
</dbReference>
<dbReference type="Gene3D" id="3.10.270.10">
    <property type="entry name" value="Urate Oxidase"/>
    <property type="match status" value="1"/>
</dbReference>
<dbReference type="HAMAP" id="MF_01527_A">
    <property type="entry name" value="GTP_cyclohydrol_A"/>
    <property type="match status" value="1"/>
</dbReference>
<dbReference type="InterPro" id="IPR003801">
    <property type="entry name" value="GTP_cyclohydrolase_FolE2/MptA"/>
</dbReference>
<dbReference type="InterPro" id="IPR022840">
    <property type="entry name" value="GTP_cyclohydrolase_MptA"/>
</dbReference>
<dbReference type="NCBIfam" id="TIGR00294">
    <property type="entry name" value="GTP cyclohydrolase MptA"/>
    <property type="match status" value="1"/>
</dbReference>
<dbReference type="PANTHER" id="PTHR36445">
    <property type="entry name" value="GTP CYCLOHYDROLASE MPTA"/>
    <property type="match status" value="1"/>
</dbReference>
<dbReference type="PANTHER" id="PTHR36445:SF1">
    <property type="entry name" value="GTP CYCLOHYDROLASE MPTA"/>
    <property type="match status" value="1"/>
</dbReference>
<dbReference type="Pfam" id="PF02649">
    <property type="entry name" value="GCHY-1"/>
    <property type="match status" value="1"/>
</dbReference>
<protein>
    <recommendedName>
        <fullName evidence="1">GTP cyclohydrolase MptA</fullName>
        <ecNumber evidence="1">3.5.4.39</ecNumber>
    </recommendedName>
    <alternativeName>
        <fullName evidence="1">GTP cyclohydrolase IV</fullName>
    </alternativeName>
</protein>
<comment type="function">
    <text evidence="1">Converts GTP to 7,8-dihydro-D-neopterin 2',3'-cyclic phosphate, the first intermediate in the biosynthesis of coenzyme methanopterin.</text>
</comment>
<comment type="catalytic activity">
    <reaction evidence="1">
        <text>GTP + H2O = 7,8-dihydroneopterin 2',3'-cyclic phosphate + formate + diphosphate + H(+)</text>
        <dbReference type="Rhea" id="RHEA:25860"/>
        <dbReference type="ChEBI" id="CHEBI:15377"/>
        <dbReference type="ChEBI" id="CHEBI:15378"/>
        <dbReference type="ChEBI" id="CHEBI:15740"/>
        <dbReference type="ChEBI" id="CHEBI:33019"/>
        <dbReference type="ChEBI" id="CHEBI:37565"/>
        <dbReference type="ChEBI" id="CHEBI:58854"/>
        <dbReference type="EC" id="3.5.4.39"/>
    </reaction>
</comment>
<comment type="cofactor">
    <cofactor evidence="1">
        <name>Fe(2+)</name>
        <dbReference type="ChEBI" id="CHEBI:29033"/>
    </cofactor>
    <text evidence="1">Binds 1 Fe(2+) ion per subunit.</text>
</comment>
<comment type="pathway">
    <text evidence="1">Cofactor biosynthesis; 5,6,7,8-tetrahydromethanopterin biosynthesis.</text>
</comment>
<comment type="subunit">
    <text evidence="1">Homodimer.</text>
</comment>
<comment type="similarity">
    <text evidence="1">Belongs to the GTP cyclohydrolase IV family.</text>
</comment>
<sequence length="311" mass="35092">MAVCLPDTQDDTPSIPIKLTRVGVTGVKKLLQLERNNKRPIILVPTFDAFVDLPNDQKGVHMSRNPEAISEVLDEVANDSSVEVETLCAKIVSKMMSKHEYAKRVEISMTTDYMFMKESPVTKNKTQEMAKLKAKAVGYREDGEIKIRKSIGAEVIGMTVCPCAQESVKESDKNKLLEFLDEETTQKVLDTVTFASHNQRGVGTLLIEVPEDREVKGEDIIEIIEESMSSPVCELLKRPDENATVLNAHKKPVFVEDCVRNMMEKIAKKYADFPEDTIITSRQENHESIHRHNAFAEKVTTMGELKEELRI</sequence>